<proteinExistence type="inferred from homology"/>
<name>HIS8_SYNP6</name>
<feature type="chain" id="PRO_0000153466" description="Histidinol-phosphate aminotransferase">
    <location>
        <begin position="1"/>
        <end position="373"/>
    </location>
</feature>
<feature type="modified residue" description="N6-(pyridoxal phosphate)lysine" evidence="1">
    <location>
        <position position="230"/>
    </location>
</feature>
<sequence>MLPFLRSELARCQPHHPNPGGTGMAMDILDTNECPYDLPTDLKQTLADRYVEAIASNRYPDGSHTDLKAAIVDYLSEQTAGQWQPGPEHVTVGNGSDELIRSILIATCLGGQGSVLVAEPTFSMYGIVAETLGIPVVRIGRDPQTWEMDLAAAETAITQTEGTPVRLCFVVHPNSPTANPLTEAEKDWLRQVPPQILVVIDEAYFEFSGETLLAELPQHPNWLITRTFSKALRLAAHRVGYGIGDPQLIAALEAIRLPYNLPSVAQLAATLALEARSQLLSAIPRLITERDRLYRKLQVVSQLQVWPSASNFLFLKTQSSSQTAALAAQLKAQGTLVRHTADGLRITIGSPAENERTLAHLQTAITQSLPATV</sequence>
<comment type="catalytic activity">
    <reaction evidence="1">
        <text>L-histidinol phosphate + 2-oxoglutarate = 3-(imidazol-4-yl)-2-oxopropyl phosphate + L-glutamate</text>
        <dbReference type="Rhea" id="RHEA:23744"/>
        <dbReference type="ChEBI" id="CHEBI:16810"/>
        <dbReference type="ChEBI" id="CHEBI:29985"/>
        <dbReference type="ChEBI" id="CHEBI:57766"/>
        <dbReference type="ChEBI" id="CHEBI:57980"/>
        <dbReference type="EC" id="2.6.1.9"/>
    </reaction>
</comment>
<comment type="cofactor">
    <cofactor evidence="1">
        <name>pyridoxal 5'-phosphate</name>
        <dbReference type="ChEBI" id="CHEBI:597326"/>
    </cofactor>
</comment>
<comment type="pathway">
    <text evidence="1">Amino-acid biosynthesis; L-histidine biosynthesis; L-histidine from 5-phospho-alpha-D-ribose 1-diphosphate: step 7/9.</text>
</comment>
<comment type="subunit">
    <text evidence="1">Homodimer.</text>
</comment>
<comment type="similarity">
    <text evidence="1">Belongs to the class-II pyridoxal-phosphate-dependent aminotransferase family. Histidinol-phosphate aminotransferase subfamily.</text>
</comment>
<accession>Q5N4R3</accession>
<dbReference type="EC" id="2.6.1.9" evidence="1"/>
<dbReference type="EMBL" id="AP008231">
    <property type="protein sequence ID" value="BAD78706.1"/>
    <property type="molecule type" value="Genomic_DNA"/>
</dbReference>
<dbReference type="RefSeq" id="WP_011242828.1">
    <property type="nucleotide sequence ID" value="NC_006576.1"/>
</dbReference>
<dbReference type="SMR" id="Q5N4R3"/>
<dbReference type="KEGG" id="syc:syc0516_c"/>
<dbReference type="eggNOG" id="COG0079">
    <property type="taxonomic scope" value="Bacteria"/>
</dbReference>
<dbReference type="UniPathway" id="UPA00031">
    <property type="reaction ID" value="UER00012"/>
</dbReference>
<dbReference type="Proteomes" id="UP000001175">
    <property type="component" value="Chromosome"/>
</dbReference>
<dbReference type="GO" id="GO:0004400">
    <property type="term" value="F:histidinol-phosphate transaminase activity"/>
    <property type="evidence" value="ECO:0007669"/>
    <property type="project" value="UniProtKB-UniRule"/>
</dbReference>
<dbReference type="GO" id="GO:0030170">
    <property type="term" value="F:pyridoxal phosphate binding"/>
    <property type="evidence" value="ECO:0007669"/>
    <property type="project" value="InterPro"/>
</dbReference>
<dbReference type="GO" id="GO:0000105">
    <property type="term" value="P:L-histidine biosynthetic process"/>
    <property type="evidence" value="ECO:0007669"/>
    <property type="project" value="UniProtKB-UniRule"/>
</dbReference>
<dbReference type="CDD" id="cd00609">
    <property type="entry name" value="AAT_like"/>
    <property type="match status" value="1"/>
</dbReference>
<dbReference type="Gene3D" id="3.90.1150.10">
    <property type="entry name" value="Aspartate Aminotransferase, domain 1"/>
    <property type="match status" value="1"/>
</dbReference>
<dbReference type="Gene3D" id="3.40.640.10">
    <property type="entry name" value="Type I PLP-dependent aspartate aminotransferase-like (Major domain)"/>
    <property type="match status" value="1"/>
</dbReference>
<dbReference type="HAMAP" id="MF_01023">
    <property type="entry name" value="HisC_aminotrans_2"/>
    <property type="match status" value="1"/>
</dbReference>
<dbReference type="InterPro" id="IPR004839">
    <property type="entry name" value="Aminotransferase_I/II_large"/>
</dbReference>
<dbReference type="InterPro" id="IPR005861">
    <property type="entry name" value="HisP_aminotrans"/>
</dbReference>
<dbReference type="InterPro" id="IPR050106">
    <property type="entry name" value="HistidinolP_aminotransfase"/>
</dbReference>
<dbReference type="InterPro" id="IPR015424">
    <property type="entry name" value="PyrdxlP-dep_Trfase"/>
</dbReference>
<dbReference type="InterPro" id="IPR015421">
    <property type="entry name" value="PyrdxlP-dep_Trfase_major"/>
</dbReference>
<dbReference type="InterPro" id="IPR015422">
    <property type="entry name" value="PyrdxlP-dep_Trfase_small"/>
</dbReference>
<dbReference type="NCBIfam" id="NF002726">
    <property type="entry name" value="PRK02610.1"/>
    <property type="match status" value="1"/>
</dbReference>
<dbReference type="PANTHER" id="PTHR43643:SF6">
    <property type="entry name" value="HISTIDINOL-PHOSPHATE AMINOTRANSFERASE"/>
    <property type="match status" value="1"/>
</dbReference>
<dbReference type="PANTHER" id="PTHR43643">
    <property type="entry name" value="HISTIDINOL-PHOSPHATE AMINOTRANSFERASE 2"/>
    <property type="match status" value="1"/>
</dbReference>
<dbReference type="Pfam" id="PF00155">
    <property type="entry name" value="Aminotran_1_2"/>
    <property type="match status" value="1"/>
</dbReference>
<dbReference type="SUPFAM" id="SSF53383">
    <property type="entry name" value="PLP-dependent transferases"/>
    <property type="match status" value="1"/>
</dbReference>
<reference key="1">
    <citation type="journal article" date="2007" name="Photosyn. Res.">
        <title>Complete nucleotide sequence of the freshwater unicellular cyanobacterium Synechococcus elongatus PCC 6301 chromosome: gene content and organization.</title>
        <authorList>
            <person name="Sugita C."/>
            <person name="Ogata K."/>
            <person name="Shikata M."/>
            <person name="Jikuya H."/>
            <person name="Takano J."/>
            <person name="Furumichi M."/>
            <person name="Kanehisa M."/>
            <person name="Omata T."/>
            <person name="Sugiura M."/>
            <person name="Sugita M."/>
        </authorList>
    </citation>
    <scope>NUCLEOTIDE SEQUENCE [LARGE SCALE GENOMIC DNA]</scope>
    <source>
        <strain>ATCC 27144 / PCC 6301 / SAUG 1402/1</strain>
    </source>
</reference>
<evidence type="ECO:0000255" key="1">
    <source>
        <dbReference type="HAMAP-Rule" id="MF_01023"/>
    </source>
</evidence>
<gene>
    <name evidence="1" type="primary">hisC</name>
    <name type="ordered locus">syc0516_c</name>
</gene>
<protein>
    <recommendedName>
        <fullName evidence="1">Histidinol-phosphate aminotransferase</fullName>
        <ecNumber evidence="1">2.6.1.9</ecNumber>
    </recommendedName>
    <alternativeName>
        <fullName evidence="1">Imidazole acetol-phosphate transaminase</fullName>
    </alternativeName>
</protein>
<keyword id="KW-0028">Amino-acid biosynthesis</keyword>
<keyword id="KW-0032">Aminotransferase</keyword>
<keyword id="KW-0368">Histidine biosynthesis</keyword>
<keyword id="KW-0663">Pyridoxal phosphate</keyword>
<keyword id="KW-0808">Transferase</keyword>
<organism>
    <name type="scientific">Synechococcus sp. (strain ATCC 27144 / PCC 6301 / SAUG 1402/1)</name>
    <name type="common">Anacystis nidulans</name>
    <dbReference type="NCBI Taxonomy" id="269084"/>
    <lineage>
        <taxon>Bacteria</taxon>
        <taxon>Bacillati</taxon>
        <taxon>Cyanobacteriota</taxon>
        <taxon>Cyanophyceae</taxon>
        <taxon>Synechococcales</taxon>
        <taxon>Synechococcaceae</taxon>
        <taxon>Synechococcus</taxon>
    </lineage>
</organism>